<feature type="chain" id="PRO_0000200984" description="UPF0761 membrane protein HI_0276">
    <location>
        <begin position="1"/>
        <end position="269"/>
    </location>
</feature>
<feature type="transmembrane region" description="Helical" evidence="1">
    <location>
        <begin position="32"/>
        <end position="52"/>
    </location>
</feature>
<feature type="transmembrane region" description="Helical" evidence="1">
    <location>
        <begin position="89"/>
        <end position="109"/>
    </location>
</feature>
<feature type="transmembrane region" description="Helical" evidence="1">
    <location>
        <begin position="128"/>
        <end position="148"/>
    </location>
</feature>
<feature type="transmembrane region" description="Helical" evidence="1">
    <location>
        <begin position="168"/>
        <end position="188"/>
    </location>
</feature>
<feature type="transmembrane region" description="Helical" evidence="1">
    <location>
        <begin position="203"/>
        <end position="223"/>
    </location>
</feature>
<feature type="transmembrane region" description="Helical" evidence="1">
    <location>
        <begin position="232"/>
        <end position="252"/>
    </location>
</feature>
<reference key="1">
    <citation type="journal article" date="1995" name="Science">
        <title>Whole-genome random sequencing and assembly of Haemophilus influenzae Rd.</title>
        <authorList>
            <person name="Fleischmann R.D."/>
            <person name="Adams M.D."/>
            <person name="White O."/>
            <person name="Clayton R.A."/>
            <person name="Kirkness E.F."/>
            <person name="Kerlavage A.R."/>
            <person name="Bult C.J."/>
            <person name="Tomb J.-F."/>
            <person name="Dougherty B.A."/>
            <person name="Merrick J.M."/>
            <person name="McKenney K."/>
            <person name="Sutton G.G."/>
            <person name="FitzHugh W."/>
            <person name="Fields C.A."/>
            <person name="Gocayne J.D."/>
            <person name="Scott J.D."/>
            <person name="Shirley R."/>
            <person name="Liu L.-I."/>
            <person name="Glodek A."/>
            <person name="Kelley J.M."/>
            <person name="Weidman J.F."/>
            <person name="Phillips C.A."/>
            <person name="Spriggs T."/>
            <person name="Hedblom E."/>
            <person name="Cotton M.D."/>
            <person name="Utterback T.R."/>
            <person name="Hanna M.C."/>
            <person name="Nguyen D.T."/>
            <person name="Saudek D.M."/>
            <person name="Brandon R.C."/>
            <person name="Fine L.D."/>
            <person name="Fritchman J.L."/>
            <person name="Fuhrmann J.L."/>
            <person name="Geoghagen N.S.M."/>
            <person name="Gnehm C.L."/>
            <person name="McDonald L.A."/>
            <person name="Small K.V."/>
            <person name="Fraser C.M."/>
            <person name="Smith H.O."/>
            <person name="Venter J.C."/>
        </authorList>
    </citation>
    <scope>NUCLEOTIDE SEQUENCE [LARGE SCALE GENOMIC DNA]</scope>
    <source>
        <strain>ATCC 51907 / DSM 11121 / KW20 / Rd</strain>
    </source>
</reference>
<proteinExistence type="inferred from homology"/>
<name>Y276_HAEIN</name>
<comment type="subcellular location">
    <subcellularLocation>
        <location evidence="1">Cell inner membrane</location>
        <topology evidence="1">Multi-pass membrane protein</topology>
    </subcellularLocation>
</comment>
<comment type="similarity">
    <text evidence="1">Belongs to the UPF0761 family.</text>
</comment>
<keyword id="KW-0997">Cell inner membrane</keyword>
<keyword id="KW-1003">Cell membrane</keyword>
<keyword id="KW-0472">Membrane</keyword>
<keyword id="KW-1185">Reference proteome</keyword>
<keyword id="KW-0812">Transmembrane</keyword>
<keyword id="KW-1133">Transmembrane helix</keyword>
<gene>
    <name type="ordered locus">HI_0276</name>
</gene>
<accession>P44608</accession>
<organism>
    <name type="scientific">Haemophilus influenzae (strain ATCC 51907 / DSM 11121 / KW20 / Rd)</name>
    <dbReference type="NCBI Taxonomy" id="71421"/>
    <lineage>
        <taxon>Bacteria</taxon>
        <taxon>Pseudomonadati</taxon>
        <taxon>Pseudomonadota</taxon>
        <taxon>Gammaproteobacteria</taxon>
        <taxon>Pasteurellales</taxon>
        <taxon>Pasteurellaceae</taxon>
        <taxon>Haemophilus</taxon>
    </lineage>
</organism>
<evidence type="ECO:0000255" key="1">
    <source>
        <dbReference type="HAMAP-Rule" id="MF_00672"/>
    </source>
</evidence>
<sequence length="269" mass="30225">MISLKNFGLLFWKRFSENKLNQVAGALTYSTMLAMVPLVMVIFSIFSAFPVFNEVTGELKEMIFTNFAPSASDMVGEYIDQFVSNSKKMSAVGIVSLIAVALMLINNIDRTLNSIWHNSQSRSPLSSFAIYWMILTLGPLIIGVSIGISSYIKIMFEQSEHLSLGLKLLSFVPFLFTWFIFTLIYTVVPNKKVKIKHSAYGAFLAAIFFTLGKQAFTWYIVTFPSYQLIYGAMATLPIMLLWIQISWLVVLVGAQLASTLDEIGEQIEQ</sequence>
<protein>
    <recommendedName>
        <fullName evidence="1">UPF0761 membrane protein HI_0276</fullName>
    </recommendedName>
</protein>
<dbReference type="EMBL" id="L42023">
    <property type="protein sequence ID" value="AAC21941.1"/>
    <property type="molecule type" value="Genomic_DNA"/>
</dbReference>
<dbReference type="PIR" id="H64146">
    <property type="entry name" value="H64146"/>
</dbReference>
<dbReference type="RefSeq" id="NP_438445.1">
    <property type="nucleotide sequence ID" value="NC_000907.1"/>
</dbReference>
<dbReference type="STRING" id="71421.HI_0276"/>
<dbReference type="EnsemblBacteria" id="AAC21941">
    <property type="protein sequence ID" value="AAC21941"/>
    <property type="gene ID" value="HI_0276"/>
</dbReference>
<dbReference type="KEGG" id="hin:HI_0276"/>
<dbReference type="PATRIC" id="fig|71421.8.peg.291"/>
<dbReference type="eggNOG" id="COG1295">
    <property type="taxonomic scope" value="Bacteria"/>
</dbReference>
<dbReference type="HOGENOM" id="CLU_032288_0_0_6"/>
<dbReference type="OrthoDB" id="9808671at2"/>
<dbReference type="PhylomeDB" id="P44608"/>
<dbReference type="BioCyc" id="HINF71421:G1GJ1-296-MONOMER"/>
<dbReference type="Proteomes" id="UP000000579">
    <property type="component" value="Chromosome"/>
</dbReference>
<dbReference type="GO" id="GO:0005886">
    <property type="term" value="C:plasma membrane"/>
    <property type="evidence" value="ECO:0000318"/>
    <property type="project" value="GO_Central"/>
</dbReference>
<dbReference type="HAMAP" id="MF_00672">
    <property type="entry name" value="UPF0761"/>
    <property type="match status" value="1"/>
</dbReference>
<dbReference type="InterPro" id="IPR023679">
    <property type="entry name" value="UPF0761_bac"/>
</dbReference>
<dbReference type="InterPro" id="IPR017039">
    <property type="entry name" value="Virul_fac_BrkB"/>
</dbReference>
<dbReference type="NCBIfam" id="NF002457">
    <property type="entry name" value="PRK01637.1"/>
    <property type="match status" value="1"/>
</dbReference>
<dbReference type="NCBIfam" id="TIGR00765">
    <property type="entry name" value="yihY_not_rbn"/>
    <property type="match status" value="1"/>
</dbReference>
<dbReference type="PANTHER" id="PTHR30213">
    <property type="entry name" value="INNER MEMBRANE PROTEIN YHJD"/>
    <property type="match status" value="1"/>
</dbReference>
<dbReference type="PANTHER" id="PTHR30213:SF0">
    <property type="entry name" value="UPF0761 MEMBRANE PROTEIN YIHY"/>
    <property type="match status" value="1"/>
</dbReference>
<dbReference type="Pfam" id="PF03631">
    <property type="entry name" value="Virul_fac_BrkB"/>
    <property type="match status" value="1"/>
</dbReference>
<dbReference type="PIRSF" id="PIRSF035875">
    <property type="entry name" value="RNase_BN"/>
    <property type="match status" value="1"/>
</dbReference>